<evidence type="ECO:0000255" key="1">
    <source>
        <dbReference type="HAMAP-Rule" id="MF_01396"/>
    </source>
</evidence>
<feature type="chain" id="PRO_5000239877" description="ATP synthase subunit c">
    <location>
        <begin position="1"/>
        <end position="70"/>
    </location>
</feature>
<feature type="transmembrane region" description="Helical" evidence="1">
    <location>
        <begin position="3"/>
        <end position="23"/>
    </location>
</feature>
<feature type="transmembrane region" description="Helical" evidence="1">
    <location>
        <begin position="44"/>
        <end position="64"/>
    </location>
</feature>
<feature type="site" description="Reversibly protonated during proton transport" evidence="1">
    <location>
        <position position="53"/>
    </location>
</feature>
<dbReference type="EMBL" id="CP000679">
    <property type="protein sequence ID" value="ABP67560.1"/>
    <property type="molecule type" value="Genomic_DNA"/>
</dbReference>
<dbReference type="RefSeq" id="WP_011917496.1">
    <property type="nucleotide sequence ID" value="NC_009437.1"/>
</dbReference>
<dbReference type="SMR" id="A4XKX5"/>
<dbReference type="STRING" id="351627.Csac_1975"/>
<dbReference type="KEGG" id="csc:Csac_1975"/>
<dbReference type="eggNOG" id="COG0636">
    <property type="taxonomic scope" value="Bacteria"/>
</dbReference>
<dbReference type="HOGENOM" id="CLU_148047_2_1_9"/>
<dbReference type="OrthoDB" id="9810379at2"/>
<dbReference type="Proteomes" id="UP000000256">
    <property type="component" value="Chromosome"/>
</dbReference>
<dbReference type="GO" id="GO:0005886">
    <property type="term" value="C:plasma membrane"/>
    <property type="evidence" value="ECO:0007669"/>
    <property type="project" value="UniProtKB-SubCell"/>
</dbReference>
<dbReference type="GO" id="GO:0045259">
    <property type="term" value="C:proton-transporting ATP synthase complex"/>
    <property type="evidence" value="ECO:0007669"/>
    <property type="project" value="UniProtKB-KW"/>
</dbReference>
<dbReference type="GO" id="GO:0033177">
    <property type="term" value="C:proton-transporting two-sector ATPase complex, proton-transporting domain"/>
    <property type="evidence" value="ECO:0007669"/>
    <property type="project" value="InterPro"/>
</dbReference>
<dbReference type="GO" id="GO:0008289">
    <property type="term" value="F:lipid binding"/>
    <property type="evidence" value="ECO:0007669"/>
    <property type="project" value="UniProtKB-KW"/>
</dbReference>
<dbReference type="GO" id="GO:0046933">
    <property type="term" value="F:proton-transporting ATP synthase activity, rotational mechanism"/>
    <property type="evidence" value="ECO:0007669"/>
    <property type="project" value="UniProtKB-UniRule"/>
</dbReference>
<dbReference type="FunFam" id="1.20.20.10:FF:000002">
    <property type="entry name" value="ATP synthase subunit c"/>
    <property type="match status" value="1"/>
</dbReference>
<dbReference type="Gene3D" id="1.20.20.10">
    <property type="entry name" value="F1F0 ATP synthase subunit C"/>
    <property type="match status" value="1"/>
</dbReference>
<dbReference type="HAMAP" id="MF_01396">
    <property type="entry name" value="ATP_synth_c_bact"/>
    <property type="match status" value="1"/>
</dbReference>
<dbReference type="InterPro" id="IPR005953">
    <property type="entry name" value="ATP_synth_csu_bac/chlpt"/>
</dbReference>
<dbReference type="InterPro" id="IPR000454">
    <property type="entry name" value="ATP_synth_F0_csu"/>
</dbReference>
<dbReference type="InterPro" id="IPR020537">
    <property type="entry name" value="ATP_synth_F0_csu_DDCD_BS"/>
</dbReference>
<dbReference type="InterPro" id="IPR038662">
    <property type="entry name" value="ATP_synth_F0_csu_sf"/>
</dbReference>
<dbReference type="InterPro" id="IPR002379">
    <property type="entry name" value="ATPase_proteolipid_c-like_dom"/>
</dbReference>
<dbReference type="InterPro" id="IPR035921">
    <property type="entry name" value="F/V-ATP_Csub_sf"/>
</dbReference>
<dbReference type="NCBIfam" id="TIGR01260">
    <property type="entry name" value="ATP_synt_c"/>
    <property type="match status" value="1"/>
</dbReference>
<dbReference type="Pfam" id="PF00137">
    <property type="entry name" value="ATP-synt_C"/>
    <property type="match status" value="1"/>
</dbReference>
<dbReference type="PRINTS" id="PR00124">
    <property type="entry name" value="ATPASEC"/>
</dbReference>
<dbReference type="SUPFAM" id="SSF81333">
    <property type="entry name" value="F1F0 ATP synthase subunit C"/>
    <property type="match status" value="1"/>
</dbReference>
<dbReference type="PROSITE" id="PS00605">
    <property type="entry name" value="ATPASE_C"/>
    <property type="match status" value="1"/>
</dbReference>
<sequence length="70" mass="6985">MTALAAGIAMLAGLGVGIGIGIATAKAAESVGRQPEAYGRILPLFFIGAALAEAVAIYSFVIAILLVLKV</sequence>
<protein>
    <recommendedName>
        <fullName evidence="1">ATP synthase subunit c</fullName>
    </recommendedName>
    <alternativeName>
        <fullName evidence="1">ATP synthase F(0) sector subunit c</fullName>
    </alternativeName>
    <alternativeName>
        <fullName evidence="1">F-type ATPase subunit c</fullName>
        <shortName evidence="1">F-ATPase subunit c</shortName>
    </alternativeName>
    <alternativeName>
        <fullName evidence="1">Lipid-binding protein</fullName>
    </alternativeName>
</protein>
<gene>
    <name evidence="1" type="primary">atpE</name>
    <name type="ordered locus">Csac_1975</name>
</gene>
<accession>A4XKX5</accession>
<proteinExistence type="inferred from homology"/>
<organism>
    <name type="scientific">Caldicellulosiruptor saccharolyticus (strain ATCC 43494 / DSM 8903 / Tp8T 6331)</name>
    <dbReference type="NCBI Taxonomy" id="351627"/>
    <lineage>
        <taxon>Bacteria</taxon>
        <taxon>Bacillati</taxon>
        <taxon>Bacillota</taxon>
        <taxon>Bacillota incertae sedis</taxon>
        <taxon>Caldicellulosiruptorales</taxon>
        <taxon>Caldicellulosiruptoraceae</taxon>
        <taxon>Caldicellulosiruptor</taxon>
    </lineage>
</organism>
<name>ATPL_CALS8</name>
<keyword id="KW-0066">ATP synthesis</keyword>
<keyword id="KW-1003">Cell membrane</keyword>
<keyword id="KW-0138">CF(0)</keyword>
<keyword id="KW-0375">Hydrogen ion transport</keyword>
<keyword id="KW-0406">Ion transport</keyword>
<keyword id="KW-0446">Lipid-binding</keyword>
<keyword id="KW-0472">Membrane</keyword>
<keyword id="KW-0812">Transmembrane</keyword>
<keyword id="KW-1133">Transmembrane helix</keyword>
<keyword id="KW-0813">Transport</keyword>
<comment type="function">
    <text evidence="1">F(1)F(0) ATP synthase produces ATP from ADP in the presence of a proton or sodium gradient. F-type ATPases consist of two structural domains, F(1) containing the extramembraneous catalytic core and F(0) containing the membrane proton channel, linked together by a central stalk and a peripheral stalk. During catalysis, ATP synthesis in the catalytic domain of F(1) is coupled via a rotary mechanism of the central stalk subunits to proton translocation.</text>
</comment>
<comment type="function">
    <text evidence="1">Key component of the F(0) channel; it plays a direct role in translocation across the membrane. A homomeric c-ring of between 10-14 subunits forms the central stalk rotor element with the F(1) delta and epsilon subunits.</text>
</comment>
<comment type="subunit">
    <text evidence="1">F-type ATPases have 2 components, F(1) - the catalytic core - and F(0) - the membrane proton channel. F(1) has five subunits: alpha(3), beta(3), gamma(1), delta(1), epsilon(1). F(0) has three main subunits: a(1), b(2) and c(10-14). The alpha and beta chains form an alternating ring which encloses part of the gamma chain. F(1) is attached to F(0) by a central stalk formed by the gamma and epsilon chains, while a peripheral stalk is formed by the delta and b chains.</text>
</comment>
<comment type="subcellular location">
    <subcellularLocation>
        <location evidence="1">Cell membrane</location>
        <topology evidence="1">Multi-pass membrane protein</topology>
    </subcellularLocation>
</comment>
<comment type="similarity">
    <text evidence="1">Belongs to the ATPase C chain family.</text>
</comment>
<reference key="1">
    <citation type="submission" date="2007-04" db="EMBL/GenBank/DDBJ databases">
        <title>Genome sequence of the thermophilic hydrogen-producing bacterium Caldicellulosiruptor saccharolyticus DSM 8903.</title>
        <authorList>
            <person name="Copeland A."/>
            <person name="Lucas S."/>
            <person name="Lapidus A."/>
            <person name="Barry K."/>
            <person name="Detter J.C."/>
            <person name="Glavina del Rio T."/>
            <person name="Hammon N."/>
            <person name="Israni S."/>
            <person name="Dalin E."/>
            <person name="Tice H."/>
            <person name="Pitluck S."/>
            <person name="Kiss H."/>
            <person name="Brettin T."/>
            <person name="Bruce D."/>
            <person name="Han C."/>
            <person name="Schmutz J."/>
            <person name="Larimer F."/>
            <person name="Land M."/>
            <person name="Hauser L."/>
            <person name="Kyrpides N."/>
            <person name="Lykidis A."/>
            <person name="van de Werken H.J.G."/>
            <person name="Verhaart M.R.A."/>
            <person name="VanFossen A.L."/>
            <person name="Lewis D.L."/>
            <person name="Nichols J.D."/>
            <person name="Goorissen H.P."/>
            <person name="van Niel E.W.J."/>
            <person name="Stams F.J.M."/>
            <person name="Willquist K.U."/>
            <person name="Ward D.E."/>
            <person name="van der Oost J."/>
            <person name="Kelly R.M."/>
            <person name="Kengen S.M.W."/>
            <person name="Richardson P."/>
        </authorList>
    </citation>
    <scope>NUCLEOTIDE SEQUENCE [LARGE SCALE GENOMIC DNA]</scope>
    <source>
        <strain>ATCC 43494 / DSM 8903 / Tp8T 6331</strain>
    </source>
</reference>